<evidence type="ECO:0000255" key="1">
    <source>
        <dbReference type="HAMAP-Rule" id="MF_03103"/>
    </source>
</evidence>
<evidence type="ECO:0000256" key="2">
    <source>
        <dbReference type="SAM" id="MobiDB-lite"/>
    </source>
</evidence>
<protein>
    <recommendedName>
        <fullName evidence="1">Maintenance of mitochondrial morphology protein 1</fullName>
    </recommendedName>
</protein>
<name>MMM1_PHANO</name>
<feature type="chain" id="PRO_0000384245" description="Maintenance of mitochondrial morphology protein 1">
    <location>
        <begin position="1"/>
        <end position="500"/>
    </location>
</feature>
<feature type="topological domain" description="Lumenal" evidence="1">
    <location>
        <begin position="1"/>
        <end position="42"/>
    </location>
</feature>
<feature type="transmembrane region" description="Helical" evidence="1">
    <location>
        <begin position="43"/>
        <end position="63"/>
    </location>
</feature>
<feature type="topological domain" description="Cytoplasmic" evidence="1">
    <location>
        <begin position="64"/>
        <end position="500"/>
    </location>
</feature>
<feature type="domain" description="SMP-LTD" evidence="1">
    <location>
        <begin position="141"/>
        <end position="375"/>
    </location>
</feature>
<feature type="region of interest" description="Disordered" evidence="2">
    <location>
        <begin position="283"/>
        <end position="316"/>
    </location>
</feature>
<feature type="region of interest" description="Disordered" evidence="2">
    <location>
        <begin position="406"/>
        <end position="500"/>
    </location>
</feature>
<feature type="compositionally biased region" description="Low complexity" evidence="2">
    <location>
        <begin position="283"/>
        <end position="294"/>
    </location>
</feature>
<feature type="compositionally biased region" description="Low complexity" evidence="2">
    <location>
        <begin position="302"/>
        <end position="316"/>
    </location>
</feature>
<feature type="compositionally biased region" description="Acidic residues" evidence="2">
    <location>
        <begin position="406"/>
        <end position="415"/>
    </location>
</feature>
<feature type="compositionally biased region" description="Basic and acidic residues" evidence="2">
    <location>
        <begin position="438"/>
        <end position="471"/>
    </location>
</feature>
<comment type="function">
    <text evidence="1">Component of the ERMES/MDM complex, which serves as a molecular tether to connect the endoplasmic reticulum (ER) and mitochondria. Components of this complex are involved in the control of mitochondrial shape and protein biogenesis, and function in nonvesicular lipid trafficking between the ER and mitochondria. The MDM12-MMM1 subcomplex functions in the major beta-barrel assembly pathway that is responsible for biogenesis of all outer membrane beta-barrel proteins, and acts in a late step after the SAM complex. The MDM10-MDM12-MMM1 subcomplex further acts in the TOM40-specific pathway after the action of the MDM12-MMM1 complex. Essential for establishing and maintaining the structure of mitochondria and maintenance of mtDNA nucleoids.</text>
</comment>
<comment type="subunit">
    <text evidence="1">Homodimer. Component of the ER-mitochondria encounter structure (ERMES) or MDM complex, composed of MMM1, MDM10, MDM12 and MDM34. A MMM1 homodimer associates with one molecule of MDM12 on each side in a pairwise head-to-tail manner, and the SMP-LTD domains of MMM1 and MDM12 generate a continuous hydrophobic tunnel for phospholipid trafficking.</text>
</comment>
<comment type="subcellular location">
    <subcellularLocation>
        <location evidence="1">Endoplasmic reticulum membrane</location>
        <topology evidence="1">Single-pass type I membrane protein</topology>
    </subcellularLocation>
    <text evidence="1">The ERMES/MDM complex localizes to a few discrete foci (around 10 per single cell), that represent mitochondria-endoplasmic reticulum junctions. These foci are often found next to mtDNA nucleoids.</text>
</comment>
<comment type="domain">
    <text evidence="1">The SMP-LTD domain is a barrel-like domain that can bind various types of glycerophospholipids in its interior and mediate their transfer between two adjacent bilayers.</text>
</comment>
<comment type="similarity">
    <text evidence="1">Belongs to the MMM1 family.</text>
</comment>
<organism>
    <name type="scientific">Phaeosphaeria nodorum (strain SN15 / ATCC MYA-4574 / FGSC 10173)</name>
    <name type="common">Glume blotch fungus</name>
    <name type="synonym">Parastagonospora nodorum</name>
    <dbReference type="NCBI Taxonomy" id="321614"/>
    <lineage>
        <taxon>Eukaryota</taxon>
        <taxon>Fungi</taxon>
        <taxon>Dikarya</taxon>
        <taxon>Ascomycota</taxon>
        <taxon>Pezizomycotina</taxon>
        <taxon>Dothideomycetes</taxon>
        <taxon>Pleosporomycetidae</taxon>
        <taxon>Pleosporales</taxon>
        <taxon>Pleosporineae</taxon>
        <taxon>Phaeosphaeriaceae</taxon>
        <taxon>Parastagonospora</taxon>
    </lineage>
</organism>
<sequence length="500" mass="55208">MATQVATPLSPSYTSELIIVCHHVLQHSPTPLTPHSLSFTQGFLLGQLSIALLIFFFIKFFIFGEPPSADDRSLHLNSLRRARTLAHQQSIKQLRTRSNSISLSLRHKDSRSIIRKGEETRGGPSIATILAKTYYNVKGHQPESLDWFNVLIAQTIAQLRADARQDDAILGSLTEVLNSGSKPDWIGEIKVNEIALGDEFPIFSNCRVMPAEDGFWYGPGTTGTEEGRLQARMDVDLSDVITIGIETTLNLNWPKPLSAVLPVALAVSIVRFSGTLALSFIPSSSPPSTSTTTPNPEHHRSNSTTSSSTSPPHRPTTLAFTFLDDYRLDLSVRSLVGSRSRLQDVPKIAQLIESRVHAWFDERAVEPRFQQIVLPSLWPRKHNTRGGATEDVEASEADLDEEVILEEEEEEEEDGGYTLPVPPQLRHPSAASTSLEAEGAKLREAEIRAGVRKQERPGMSRAQTSREEGVRYRPKPVSRTSEGWSGQKGMPGALAPGTFR</sequence>
<dbReference type="EMBL" id="CH445361">
    <property type="protein sequence ID" value="EAT77224.1"/>
    <property type="molecule type" value="Genomic_DNA"/>
</dbReference>
<dbReference type="RefSeq" id="XP_001805445.1">
    <property type="nucleotide sequence ID" value="XM_001805393.1"/>
</dbReference>
<dbReference type="SMR" id="Q0TYM0"/>
<dbReference type="FunCoup" id="Q0TYM0">
    <property type="interactions" value="61"/>
</dbReference>
<dbReference type="STRING" id="321614.Q0TYM0"/>
<dbReference type="EnsemblFungi" id="SNOT_15291">
    <property type="protein sequence ID" value="SNOT_15291"/>
    <property type="gene ID" value="SNOG_15291"/>
</dbReference>
<dbReference type="GeneID" id="5982374"/>
<dbReference type="KEGG" id="pno:SNOG_15291"/>
<dbReference type="VEuPathDB" id="FungiDB:JI435_152910"/>
<dbReference type="eggNOG" id="ENOG502QUUW">
    <property type="taxonomic scope" value="Eukaryota"/>
</dbReference>
<dbReference type="HOGENOM" id="CLU_032730_1_0_1"/>
<dbReference type="InParanoid" id="Q0TYM0"/>
<dbReference type="OMA" id="WSFTQGL"/>
<dbReference type="Proteomes" id="UP000001055">
    <property type="component" value="Unassembled WGS sequence"/>
</dbReference>
<dbReference type="GO" id="GO:0005783">
    <property type="term" value="C:endoplasmic reticulum"/>
    <property type="evidence" value="ECO:0000318"/>
    <property type="project" value="GO_Central"/>
</dbReference>
<dbReference type="GO" id="GO:0005789">
    <property type="term" value="C:endoplasmic reticulum membrane"/>
    <property type="evidence" value="ECO:0007669"/>
    <property type="project" value="UniProtKB-SubCell"/>
</dbReference>
<dbReference type="GO" id="GO:0032865">
    <property type="term" value="C:ERMES complex"/>
    <property type="evidence" value="ECO:0000318"/>
    <property type="project" value="GO_Central"/>
</dbReference>
<dbReference type="GO" id="GO:0008289">
    <property type="term" value="F:lipid binding"/>
    <property type="evidence" value="ECO:0000318"/>
    <property type="project" value="GO_Central"/>
</dbReference>
<dbReference type="GO" id="GO:0015917">
    <property type="term" value="P:aminophospholipid transport"/>
    <property type="evidence" value="ECO:0000318"/>
    <property type="project" value="GO_Central"/>
</dbReference>
<dbReference type="GO" id="GO:0120009">
    <property type="term" value="P:intermembrane lipid transfer"/>
    <property type="evidence" value="ECO:0007669"/>
    <property type="project" value="GOC"/>
</dbReference>
<dbReference type="GO" id="GO:0000002">
    <property type="term" value="P:mitochondrial genome maintenance"/>
    <property type="evidence" value="ECO:0007669"/>
    <property type="project" value="UniProtKB-UniRule"/>
</dbReference>
<dbReference type="GO" id="GO:1990456">
    <property type="term" value="P:mitochondrion-endoplasmic reticulum membrane tethering"/>
    <property type="evidence" value="ECO:0000318"/>
    <property type="project" value="GO_Central"/>
</dbReference>
<dbReference type="GO" id="GO:0045040">
    <property type="term" value="P:protein insertion into mitochondrial outer membrane"/>
    <property type="evidence" value="ECO:0007669"/>
    <property type="project" value="UniProtKB-UniRule"/>
</dbReference>
<dbReference type="CDD" id="cd21671">
    <property type="entry name" value="SMP_Mmm1"/>
    <property type="match status" value="1"/>
</dbReference>
<dbReference type="HAMAP" id="MF_03103">
    <property type="entry name" value="Mmm1"/>
    <property type="match status" value="1"/>
</dbReference>
<dbReference type="InterPro" id="IPR027537">
    <property type="entry name" value="Mmm1"/>
</dbReference>
<dbReference type="InterPro" id="IPR019411">
    <property type="entry name" value="MMM1_dom"/>
</dbReference>
<dbReference type="InterPro" id="IPR031468">
    <property type="entry name" value="SMP_LBD"/>
</dbReference>
<dbReference type="PANTHER" id="PTHR13466:SF0">
    <property type="entry name" value="SMP-LTD DOMAIN-CONTAINING PROTEIN"/>
    <property type="match status" value="1"/>
</dbReference>
<dbReference type="PANTHER" id="PTHR13466">
    <property type="entry name" value="TEX2 PROTEIN-RELATED"/>
    <property type="match status" value="1"/>
</dbReference>
<dbReference type="Pfam" id="PF10296">
    <property type="entry name" value="MMM1"/>
    <property type="match status" value="1"/>
</dbReference>
<dbReference type="PROSITE" id="PS51847">
    <property type="entry name" value="SMP"/>
    <property type="match status" value="1"/>
</dbReference>
<proteinExistence type="inferred from homology"/>
<gene>
    <name evidence="1" type="primary">MMM1</name>
    <name type="ORF">SNOG_15291</name>
</gene>
<reference key="1">
    <citation type="journal article" date="2007" name="Plant Cell">
        <title>Dothideomycete-plant interactions illuminated by genome sequencing and EST analysis of the wheat pathogen Stagonospora nodorum.</title>
        <authorList>
            <person name="Hane J.K."/>
            <person name="Lowe R.G.T."/>
            <person name="Solomon P.S."/>
            <person name="Tan K.-C."/>
            <person name="Schoch C.L."/>
            <person name="Spatafora J.W."/>
            <person name="Crous P.W."/>
            <person name="Kodira C.D."/>
            <person name="Birren B.W."/>
            <person name="Galagan J.E."/>
            <person name="Torriani S.F.F."/>
            <person name="McDonald B.A."/>
            <person name="Oliver R.P."/>
        </authorList>
    </citation>
    <scope>NUCLEOTIDE SEQUENCE [LARGE SCALE GENOMIC DNA]</scope>
    <source>
        <strain>SN15 / ATCC MYA-4574 / FGSC 10173</strain>
    </source>
</reference>
<keyword id="KW-0256">Endoplasmic reticulum</keyword>
<keyword id="KW-0445">Lipid transport</keyword>
<keyword id="KW-0446">Lipid-binding</keyword>
<keyword id="KW-0472">Membrane</keyword>
<keyword id="KW-0812">Transmembrane</keyword>
<keyword id="KW-1133">Transmembrane helix</keyword>
<keyword id="KW-0813">Transport</keyword>
<accession>Q0TYM0</accession>